<organism>
    <name type="scientific">Streptococcus gordonii (strain Challis / ATCC 35105 / BCRC 15272 / CH1 / DL1 / V288)</name>
    <dbReference type="NCBI Taxonomy" id="467705"/>
    <lineage>
        <taxon>Bacteria</taxon>
        <taxon>Bacillati</taxon>
        <taxon>Bacillota</taxon>
        <taxon>Bacilli</taxon>
        <taxon>Lactobacillales</taxon>
        <taxon>Streptococcaceae</taxon>
        <taxon>Streptococcus</taxon>
    </lineage>
</organism>
<comment type="function">
    <text evidence="1">Catalyzes the interconversion of L-alanine and D-alanine. May also act on other amino acids.</text>
</comment>
<comment type="catalytic activity">
    <reaction evidence="1">
        <text>L-alanine = D-alanine</text>
        <dbReference type="Rhea" id="RHEA:20249"/>
        <dbReference type="ChEBI" id="CHEBI:57416"/>
        <dbReference type="ChEBI" id="CHEBI:57972"/>
        <dbReference type="EC" id="5.1.1.1"/>
    </reaction>
</comment>
<comment type="cofactor">
    <cofactor evidence="1">
        <name>pyridoxal 5'-phosphate</name>
        <dbReference type="ChEBI" id="CHEBI:597326"/>
    </cofactor>
</comment>
<comment type="pathway">
    <text evidence="1">Amino-acid biosynthesis; D-alanine biosynthesis; D-alanine from L-alanine: step 1/1.</text>
</comment>
<comment type="similarity">
    <text evidence="1">Belongs to the alanine racemase family.</text>
</comment>
<keyword id="KW-0413">Isomerase</keyword>
<keyword id="KW-0663">Pyridoxal phosphate</keyword>
<keyword id="KW-1185">Reference proteome</keyword>
<proteinExistence type="inferred from homology"/>
<reference key="1">
    <citation type="journal article" date="2007" name="J. Bacteriol.">
        <title>Genome-wide transcriptional changes in Streptococcus gordonii in response to competence signaling peptide.</title>
        <authorList>
            <person name="Vickerman M.M."/>
            <person name="Iobst S."/>
            <person name="Jesionowski A.M."/>
            <person name="Gill S.R."/>
        </authorList>
    </citation>
    <scope>NUCLEOTIDE SEQUENCE [LARGE SCALE GENOMIC DNA]</scope>
    <source>
        <strain>Challis / ATCC 35105 / BCRC 15272 / CH1 / DL1 / V288</strain>
    </source>
</reference>
<protein>
    <recommendedName>
        <fullName evidence="1">Alanine racemase</fullName>
        <ecNumber evidence="1">5.1.1.1</ecNumber>
    </recommendedName>
</protein>
<dbReference type="EC" id="5.1.1.1" evidence="1"/>
<dbReference type="EMBL" id="CP000725">
    <property type="protein sequence ID" value="ABV09604.1"/>
    <property type="molecule type" value="Genomic_DNA"/>
</dbReference>
<dbReference type="RefSeq" id="WP_011999929.1">
    <property type="nucleotide sequence ID" value="NC_009785.1"/>
</dbReference>
<dbReference type="SMR" id="A8AVC4"/>
<dbReference type="STRING" id="467705.SGO_0418"/>
<dbReference type="KEGG" id="sgo:SGO_0418"/>
<dbReference type="eggNOG" id="COG0787">
    <property type="taxonomic scope" value="Bacteria"/>
</dbReference>
<dbReference type="HOGENOM" id="CLU_028393_2_1_9"/>
<dbReference type="UniPathway" id="UPA00042">
    <property type="reaction ID" value="UER00497"/>
</dbReference>
<dbReference type="Proteomes" id="UP000001131">
    <property type="component" value="Chromosome"/>
</dbReference>
<dbReference type="GO" id="GO:0005829">
    <property type="term" value="C:cytosol"/>
    <property type="evidence" value="ECO:0007669"/>
    <property type="project" value="TreeGrafter"/>
</dbReference>
<dbReference type="GO" id="GO:0008784">
    <property type="term" value="F:alanine racemase activity"/>
    <property type="evidence" value="ECO:0007669"/>
    <property type="project" value="UniProtKB-UniRule"/>
</dbReference>
<dbReference type="GO" id="GO:0030170">
    <property type="term" value="F:pyridoxal phosphate binding"/>
    <property type="evidence" value="ECO:0007669"/>
    <property type="project" value="UniProtKB-UniRule"/>
</dbReference>
<dbReference type="GO" id="GO:0030632">
    <property type="term" value="P:D-alanine biosynthetic process"/>
    <property type="evidence" value="ECO:0007669"/>
    <property type="project" value="UniProtKB-UniRule"/>
</dbReference>
<dbReference type="GO" id="GO:0009252">
    <property type="term" value="P:peptidoglycan biosynthetic process"/>
    <property type="evidence" value="ECO:0007669"/>
    <property type="project" value="TreeGrafter"/>
</dbReference>
<dbReference type="CDD" id="cd00430">
    <property type="entry name" value="PLPDE_III_AR"/>
    <property type="match status" value="1"/>
</dbReference>
<dbReference type="FunFam" id="2.40.37.10:FF:000006">
    <property type="entry name" value="Alanine racemase"/>
    <property type="match status" value="1"/>
</dbReference>
<dbReference type="FunFam" id="3.20.20.10:FF:000002">
    <property type="entry name" value="Alanine racemase"/>
    <property type="match status" value="1"/>
</dbReference>
<dbReference type="Gene3D" id="3.20.20.10">
    <property type="entry name" value="Alanine racemase"/>
    <property type="match status" value="1"/>
</dbReference>
<dbReference type="Gene3D" id="2.40.37.10">
    <property type="entry name" value="Lyase, Ornithine Decarboxylase, Chain A, domain 1"/>
    <property type="match status" value="1"/>
</dbReference>
<dbReference type="HAMAP" id="MF_01201">
    <property type="entry name" value="Ala_racemase"/>
    <property type="match status" value="1"/>
</dbReference>
<dbReference type="InterPro" id="IPR000821">
    <property type="entry name" value="Ala_racemase"/>
</dbReference>
<dbReference type="InterPro" id="IPR009006">
    <property type="entry name" value="Ala_racemase/Decarboxylase_C"/>
</dbReference>
<dbReference type="InterPro" id="IPR011079">
    <property type="entry name" value="Ala_racemase_C"/>
</dbReference>
<dbReference type="InterPro" id="IPR001608">
    <property type="entry name" value="Ala_racemase_N"/>
</dbReference>
<dbReference type="InterPro" id="IPR020622">
    <property type="entry name" value="Ala_racemase_pyridoxalP-BS"/>
</dbReference>
<dbReference type="InterPro" id="IPR029066">
    <property type="entry name" value="PLP-binding_barrel"/>
</dbReference>
<dbReference type="NCBIfam" id="TIGR00492">
    <property type="entry name" value="alr"/>
    <property type="match status" value="1"/>
</dbReference>
<dbReference type="PANTHER" id="PTHR30511">
    <property type="entry name" value="ALANINE RACEMASE"/>
    <property type="match status" value="1"/>
</dbReference>
<dbReference type="PANTHER" id="PTHR30511:SF0">
    <property type="entry name" value="ALANINE RACEMASE, CATABOLIC-RELATED"/>
    <property type="match status" value="1"/>
</dbReference>
<dbReference type="Pfam" id="PF00842">
    <property type="entry name" value="Ala_racemase_C"/>
    <property type="match status" value="1"/>
</dbReference>
<dbReference type="Pfam" id="PF01168">
    <property type="entry name" value="Ala_racemase_N"/>
    <property type="match status" value="1"/>
</dbReference>
<dbReference type="PRINTS" id="PR00992">
    <property type="entry name" value="ALARACEMASE"/>
</dbReference>
<dbReference type="SMART" id="SM01005">
    <property type="entry name" value="Ala_racemase_C"/>
    <property type="match status" value="1"/>
</dbReference>
<dbReference type="SUPFAM" id="SSF50621">
    <property type="entry name" value="Alanine racemase C-terminal domain-like"/>
    <property type="match status" value="1"/>
</dbReference>
<dbReference type="SUPFAM" id="SSF51419">
    <property type="entry name" value="PLP-binding barrel"/>
    <property type="match status" value="1"/>
</dbReference>
<dbReference type="PROSITE" id="PS00395">
    <property type="entry name" value="ALANINE_RACEMASE"/>
    <property type="match status" value="1"/>
</dbReference>
<name>ALR_STRGC</name>
<feature type="chain" id="PRO_1000085508" description="Alanine racemase">
    <location>
        <begin position="1"/>
        <end position="368"/>
    </location>
</feature>
<feature type="active site" description="Proton acceptor; specific for D-alanine" evidence="1">
    <location>
        <position position="40"/>
    </location>
</feature>
<feature type="active site" description="Proton acceptor; specific for L-alanine" evidence="1">
    <location>
        <position position="263"/>
    </location>
</feature>
<feature type="binding site" evidence="1">
    <location>
        <position position="136"/>
    </location>
    <ligand>
        <name>substrate</name>
    </ligand>
</feature>
<feature type="binding site" evidence="1">
    <location>
        <position position="310"/>
    </location>
    <ligand>
        <name>substrate</name>
    </ligand>
</feature>
<feature type="modified residue" description="N6-(pyridoxal phosphate)lysine" evidence="1">
    <location>
        <position position="40"/>
    </location>
</feature>
<accession>A8AVC4</accession>
<evidence type="ECO:0000255" key="1">
    <source>
        <dbReference type="HAMAP-Rule" id="MF_01201"/>
    </source>
</evidence>
<sequence length="368" mass="39876">MKTSIHRPSQALVDLSAIHFNIEQLKAHLPQDVEKWAVVKANAYGHGAVAVSSYIDDIVDGFCVSNIDEALELREGGLDKKILILGVSAIEVVPLAIQNKITLTVASLEWLDLLEASSLSLQGLVVHLKVDSGMGRIGFRDRQPLQEAINRLQVAGVQVEGIFTHFATADEADASKFEEQLACFKGILAELDALPPIIHASNSATSLWHTDTVMNAVRLGDIIYGLNPSGSVLELPYDIKPALSLVSELVHVKEVEAGADVGYGATYTADEGQFIGTIPLGYADGWTRDMQGFDVLIDGQRCPIVGRISMDQITVRLPEKYPLGTPVVFIGKSGTESISATDVAEKRGTINYEVVCLISDRVPRIYKN</sequence>
<gene>
    <name type="primary">alr</name>
    <name type="ordered locus">SGO_0418</name>
</gene>